<keyword id="KW-0052">Apoplast</keyword>
<keyword id="KW-0119">Carbohydrate metabolism</keyword>
<keyword id="KW-0146">Chitin degradation</keyword>
<keyword id="KW-0325">Glycoprotein</keyword>
<keyword id="KW-0326">Glycosidase</keyword>
<keyword id="KW-0341">Growth regulation</keyword>
<keyword id="KW-0378">Hydrolase</keyword>
<keyword id="KW-0611">Plant defense</keyword>
<keyword id="KW-0624">Polysaccharide degradation</keyword>
<keyword id="KW-1185">Reference proteome</keyword>
<keyword id="KW-0964">Secreted</keyword>
<keyword id="KW-0732">Signal</keyword>
<sequence length="424" mass="44620">MSLHLLLAVSLCVALASSLPWAAASANGNGNGKPLVAAITKDAATSLYTVPIKDGRPLVLDLAGALVWMSCAAAHPTLECHHHFCMHAHSYHPPGCPHNGYGRADVEDPFRCKCTAHPYNPFSGESATADLTRTRLSANATDGKNPLYPVSFAAVTSCAPDSLLAKLPAGAVGVAGLARTRLALQAQVARSQKVANKFALCLPSGGGGDGVAIFGGGPLFLLPPGRPDVAATLAGETPLHRNKDLPGYFISATKIAVNQEQVQLYTQEPLVVELCTRIPYTALRPDVYRAVVDAFARATAGRKRVTPPPPPAAPFELCYDSRDLGSTRLGYAVPQIDLVLEGGKNWTVFGGNSMAQVSDNTACLAVVKVKGEKGSPPPPAAIIGGFQMENNLVVFDEEKQRLGFSGLLWGRQTTCSNFNFTLAA</sequence>
<name>CLP_ORYSJ</name>
<gene>
    <name evidence="6" type="primary">CLP</name>
    <name evidence="9" type="ordered locus">Os01g0937050</name>
    <name evidence="7" type="ordered locus">LOC_Os01g71080</name>
    <name evidence="8" type="ORF">P0504E02.9</name>
</gene>
<evidence type="ECO:0000255" key="1"/>
<evidence type="ECO:0000255" key="2">
    <source>
        <dbReference type="PROSITE-ProRule" id="PRU00498"/>
    </source>
</evidence>
<evidence type="ECO:0000255" key="3">
    <source>
        <dbReference type="PROSITE-ProRule" id="PRU01103"/>
    </source>
</evidence>
<evidence type="ECO:0000269" key="4">
    <source>
    </source>
</evidence>
<evidence type="ECO:0000269" key="5">
    <source>
    </source>
</evidence>
<evidence type="ECO:0000303" key="6">
    <source>
    </source>
</evidence>
<evidence type="ECO:0000305" key="7"/>
<evidence type="ECO:0000312" key="8">
    <source>
        <dbReference type="EMBL" id="BAB89707.1"/>
    </source>
</evidence>
<evidence type="ECO:0000312" key="9">
    <source>
        <dbReference type="EMBL" id="BAH91462.1"/>
    </source>
</evidence>
<proteinExistence type="evidence at protein level"/>
<protein>
    <recommendedName>
        <fullName evidence="6">Chitinase CLP</fullName>
        <shortName evidence="6">OsCLP</shortName>
        <ecNumber evidence="4">3.2.1.14</ecNumber>
    </recommendedName>
    <alternativeName>
        <fullName evidence="6">Chitinase-like protein</fullName>
    </alternativeName>
</protein>
<reference key="1">
    <citation type="journal article" date="2002" name="Nature">
        <title>The genome sequence and structure of rice chromosome 1.</title>
        <authorList>
            <person name="Sasaki T."/>
            <person name="Matsumoto T."/>
            <person name="Yamamoto K."/>
            <person name="Sakata K."/>
            <person name="Baba T."/>
            <person name="Katayose Y."/>
            <person name="Wu J."/>
            <person name="Niimura Y."/>
            <person name="Cheng Z."/>
            <person name="Nagamura Y."/>
            <person name="Antonio B.A."/>
            <person name="Kanamori H."/>
            <person name="Hosokawa S."/>
            <person name="Masukawa M."/>
            <person name="Arikawa K."/>
            <person name="Chiden Y."/>
            <person name="Hayashi M."/>
            <person name="Okamoto M."/>
            <person name="Ando T."/>
            <person name="Aoki H."/>
            <person name="Arita K."/>
            <person name="Hamada M."/>
            <person name="Harada C."/>
            <person name="Hijishita S."/>
            <person name="Honda M."/>
            <person name="Ichikawa Y."/>
            <person name="Idonuma A."/>
            <person name="Iijima M."/>
            <person name="Ikeda M."/>
            <person name="Ikeno M."/>
            <person name="Ito S."/>
            <person name="Ito T."/>
            <person name="Ito Y."/>
            <person name="Ito Y."/>
            <person name="Iwabuchi A."/>
            <person name="Kamiya K."/>
            <person name="Karasawa W."/>
            <person name="Katagiri S."/>
            <person name="Kikuta A."/>
            <person name="Kobayashi N."/>
            <person name="Kono I."/>
            <person name="Machita K."/>
            <person name="Maehara T."/>
            <person name="Mizuno H."/>
            <person name="Mizubayashi T."/>
            <person name="Mukai Y."/>
            <person name="Nagasaki H."/>
            <person name="Nakashima M."/>
            <person name="Nakama Y."/>
            <person name="Nakamichi Y."/>
            <person name="Nakamura M."/>
            <person name="Namiki N."/>
            <person name="Negishi M."/>
            <person name="Ohta I."/>
            <person name="Ono N."/>
            <person name="Saji S."/>
            <person name="Sakai K."/>
            <person name="Shibata M."/>
            <person name="Shimokawa T."/>
            <person name="Shomura A."/>
            <person name="Song J."/>
            <person name="Takazaki Y."/>
            <person name="Terasawa K."/>
            <person name="Tsuji K."/>
            <person name="Waki K."/>
            <person name="Yamagata H."/>
            <person name="Yamane H."/>
            <person name="Yoshiki S."/>
            <person name="Yoshihara R."/>
            <person name="Yukawa K."/>
            <person name="Zhong H."/>
            <person name="Iwama H."/>
            <person name="Endo T."/>
            <person name="Ito H."/>
            <person name="Hahn J.H."/>
            <person name="Kim H.-I."/>
            <person name="Eun M.-Y."/>
            <person name="Yano M."/>
            <person name="Jiang J."/>
            <person name="Gojobori T."/>
        </authorList>
    </citation>
    <scope>NUCLEOTIDE SEQUENCE [LARGE SCALE GENOMIC DNA]</scope>
    <source>
        <strain>cv. Nipponbare</strain>
    </source>
</reference>
<reference key="2">
    <citation type="journal article" date="2005" name="Nature">
        <title>The map-based sequence of the rice genome.</title>
        <authorList>
            <consortium name="International rice genome sequencing project (IRGSP)"/>
        </authorList>
    </citation>
    <scope>NUCLEOTIDE SEQUENCE [LARGE SCALE GENOMIC DNA]</scope>
    <source>
        <strain>cv. Nipponbare</strain>
    </source>
</reference>
<reference key="3">
    <citation type="journal article" date="2008" name="Nucleic Acids Res.">
        <title>The rice annotation project database (RAP-DB): 2008 update.</title>
        <authorList>
            <consortium name="The rice annotation project (RAP)"/>
        </authorList>
    </citation>
    <scope>GENOME REANNOTATION</scope>
    <source>
        <strain>cv. Nipponbare</strain>
    </source>
</reference>
<reference key="4">
    <citation type="journal article" date="2013" name="Rice">
        <title>Improvement of the Oryza sativa Nipponbare reference genome using next generation sequence and optical map data.</title>
        <authorList>
            <person name="Kawahara Y."/>
            <person name="de la Bastide M."/>
            <person name="Hamilton J.P."/>
            <person name="Kanamori H."/>
            <person name="McCombie W.R."/>
            <person name="Ouyang S."/>
            <person name="Schwartz D.C."/>
            <person name="Tanaka T."/>
            <person name="Wu J."/>
            <person name="Zhou S."/>
            <person name="Childs K.L."/>
            <person name="Davidson R.M."/>
            <person name="Lin H."/>
            <person name="Quesada-Ocampo L."/>
            <person name="Vaillancourt B."/>
            <person name="Sakai H."/>
            <person name="Lee S.S."/>
            <person name="Kim J."/>
            <person name="Numa H."/>
            <person name="Itoh T."/>
            <person name="Buell C.R."/>
            <person name="Matsumoto T."/>
        </authorList>
    </citation>
    <scope>GENOME REANNOTATION</scope>
    <source>
        <strain>cv. Nipponbare</strain>
    </source>
</reference>
<reference key="5">
    <citation type="journal article" date="2013" name="BMC Biotechnol.">
        <title>Characterization of a newly identified rice chitinase-like protein (OsCLP) homologous to xylanase inhibitor.</title>
        <authorList>
            <person name="Wu J."/>
            <person name="Wang Y."/>
            <person name="Kim S.T."/>
            <person name="Kim S.G."/>
            <person name="Kang K.Y."/>
        </authorList>
    </citation>
    <scope>FUNCTION</scope>
    <scope>CATALYTIC ACTIVITY</scope>
    <scope>INDUCTION</scope>
</reference>
<reference key="6">
    <citation type="journal article" date="2017" name="Physiol. Plantarum">
        <title>A secreted chitinase-like protein (OsCLP) supports root growth through calcium signaling in Oryza sativa.</title>
        <authorList>
            <person name="Wu J."/>
            <person name="Wang Y."/>
            <person name="Kim S.G."/>
            <person name="Jung K.H."/>
            <person name="Gupta R."/>
            <person name="Kim J."/>
            <person name="Park Y."/>
            <person name="Kang K.Y."/>
            <person name="Kim S.T."/>
        </authorList>
    </citation>
    <scope>FUNCTION</scope>
    <scope>SUBCELLULAR LOCATION</scope>
    <scope>TISSUE SPECIFICITY</scope>
    <scope>DISRUPTION PHENOTYPE</scope>
</reference>
<dbReference type="EC" id="3.2.1.14" evidence="4"/>
<dbReference type="EMBL" id="AP003269">
    <property type="protein sequence ID" value="BAB89707.1"/>
    <property type="molecule type" value="Genomic_DNA"/>
</dbReference>
<dbReference type="EMBL" id="AP008207">
    <property type="protein sequence ID" value="BAH91462.1"/>
    <property type="molecule type" value="Genomic_DNA"/>
</dbReference>
<dbReference type="EMBL" id="AP014957">
    <property type="protein sequence ID" value="BAS76113.1"/>
    <property type="molecule type" value="Genomic_DNA"/>
</dbReference>
<dbReference type="SMR" id="Q8S1V1"/>
<dbReference type="FunCoup" id="Q8S1V1">
    <property type="interactions" value="356"/>
</dbReference>
<dbReference type="STRING" id="39947.Q8S1V1"/>
<dbReference type="MEROPS" id="A01.974"/>
<dbReference type="GlyCosmos" id="Q8S1V1">
    <property type="glycosylation" value="3 sites, No reported glycans"/>
</dbReference>
<dbReference type="PaxDb" id="39947-Q8S1V1"/>
<dbReference type="EnsemblPlants" id="Os01t0937050-01">
    <property type="protein sequence ID" value="Os01t0937050-01"/>
    <property type="gene ID" value="Os01g0937050"/>
</dbReference>
<dbReference type="GeneID" id="9267890"/>
<dbReference type="Gramene" id="Os01t0937050-01">
    <property type="protein sequence ID" value="Os01t0937050-01"/>
    <property type="gene ID" value="Os01g0937050"/>
</dbReference>
<dbReference type="KEGG" id="dosa:Os01g0937050"/>
<dbReference type="KEGG" id="osa:9267890"/>
<dbReference type="eggNOG" id="KOG1339">
    <property type="taxonomic scope" value="Eukaryota"/>
</dbReference>
<dbReference type="HOGENOM" id="CLU_032185_1_0_1"/>
<dbReference type="InParanoid" id="Q8S1V1"/>
<dbReference type="OMA" id="YAVPQVD"/>
<dbReference type="OrthoDB" id="1258937at2759"/>
<dbReference type="Proteomes" id="UP000000763">
    <property type="component" value="Chromosome 1"/>
</dbReference>
<dbReference type="Proteomes" id="UP000059680">
    <property type="component" value="Chromosome 1"/>
</dbReference>
<dbReference type="GO" id="GO:0048046">
    <property type="term" value="C:apoplast"/>
    <property type="evidence" value="ECO:0000314"/>
    <property type="project" value="UniProtKB"/>
</dbReference>
<dbReference type="GO" id="GO:0004190">
    <property type="term" value="F:aspartic-type endopeptidase activity"/>
    <property type="evidence" value="ECO:0007669"/>
    <property type="project" value="InterPro"/>
</dbReference>
<dbReference type="GO" id="GO:0008843">
    <property type="term" value="F:endochitinase activity"/>
    <property type="evidence" value="ECO:0000314"/>
    <property type="project" value="UniProtKB"/>
</dbReference>
<dbReference type="GO" id="GO:0006032">
    <property type="term" value="P:chitin catabolic process"/>
    <property type="evidence" value="ECO:0007669"/>
    <property type="project" value="UniProtKB-KW"/>
</dbReference>
<dbReference type="GO" id="GO:0050832">
    <property type="term" value="P:defense response to fungus"/>
    <property type="evidence" value="ECO:0000314"/>
    <property type="project" value="UniProtKB"/>
</dbReference>
<dbReference type="GO" id="GO:0000272">
    <property type="term" value="P:polysaccharide catabolic process"/>
    <property type="evidence" value="ECO:0007669"/>
    <property type="project" value="UniProtKB-KW"/>
</dbReference>
<dbReference type="GO" id="GO:0006508">
    <property type="term" value="P:proteolysis"/>
    <property type="evidence" value="ECO:0007669"/>
    <property type="project" value="InterPro"/>
</dbReference>
<dbReference type="GO" id="GO:0048364">
    <property type="term" value="P:root development"/>
    <property type="evidence" value="ECO:0000315"/>
    <property type="project" value="UniProtKB"/>
</dbReference>
<dbReference type="GO" id="GO:0048367">
    <property type="term" value="P:shoot system development"/>
    <property type="evidence" value="ECO:0000315"/>
    <property type="project" value="UniProtKB"/>
</dbReference>
<dbReference type="CDD" id="cd05489">
    <property type="entry name" value="xylanase_inhibitor_I_like"/>
    <property type="match status" value="1"/>
</dbReference>
<dbReference type="FunFam" id="2.40.70.10:FF:000088">
    <property type="entry name" value="Eukaryotic aspartyl protease family protein"/>
    <property type="match status" value="1"/>
</dbReference>
<dbReference type="FunFam" id="2.40.70.10:FF:000075">
    <property type="entry name" value="Putative xylanase inhibitor"/>
    <property type="match status" value="1"/>
</dbReference>
<dbReference type="Gene3D" id="2.40.70.10">
    <property type="entry name" value="Acid Proteases"/>
    <property type="match status" value="2"/>
</dbReference>
<dbReference type="InterPro" id="IPR001461">
    <property type="entry name" value="Aspartic_peptidase_A1"/>
</dbReference>
<dbReference type="InterPro" id="IPR033121">
    <property type="entry name" value="PEPTIDASE_A1"/>
</dbReference>
<dbReference type="InterPro" id="IPR021109">
    <property type="entry name" value="Peptidase_aspartic_dom_sf"/>
</dbReference>
<dbReference type="InterPro" id="IPR032799">
    <property type="entry name" value="TAXi_C"/>
</dbReference>
<dbReference type="InterPro" id="IPR032861">
    <property type="entry name" value="TAXi_N"/>
</dbReference>
<dbReference type="InterPro" id="IPR033868">
    <property type="entry name" value="Xylanase_inhibitor_I-like"/>
</dbReference>
<dbReference type="PANTHER" id="PTHR47965">
    <property type="entry name" value="ASPARTYL PROTEASE-RELATED"/>
    <property type="match status" value="1"/>
</dbReference>
<dbReference type="PANTHER" id="PTHR47965:SF60">
    <property type="entry name" value="CHITINASE CLP"/>
    <property type="match status" value="1"/>
</dbReference>
<dbReference type="Pfam" id="PF14541">
    <property type="entry name" value="TAXi_C"/>
    <property type="match status" value="1"/>
</dbReference>
<dbReference type="Pfam" id="PF14543">
    <property type="entry name" value="TAXi_N"/>
    <property type="match status" value="1"/>
</dbReference>
<dbReference type="SUPFAM" id="SSF50630">
    <property type="entry name" value="Acid proteases"/>
    <property type="match status" value="1"/>
</dbReference>
<dbReference type="PROSITE" id="PS51767">
    <property type="entry name" value="PEPTIDASE_A1"/>
    <property type="match status" value="1"/>
</dbReference>
<organism>
    <name type="scientific">Oryza sativa subsp. japonica</name>
    <name type="common">Rice</name>
    <dbReference type="NCBI Taxonomy" id="39947"/>
    <lineage>
        <taxon>Eukaryota</taxon>
        <taxon>Viridiplantae</taxon>
        <taxon>Streptophyta</taxon>
        <taxon>Embryophyta</taxon>
        <taxon>Tracheophyta</taxon>
        <taxon>Spermatophyta</taxon>
        <taxon>Magnoliopsida</taxon>
        <taxon>Liliopsida</taxon>
        <taxon>Poales</taxon>
        <taxon>Poaceae</taxon>
        <taxon>BOP clade</taxon>
        <taxon>Oryzoideae</taxon>
        <taxon>Oryzeae</taxon>
        <taxon>Oryzinae</taxon>
        <taxon>Oryza</taxon>
        <taxon>Oryza sativa</taxon>
    </lineage>
</organism>
<comment type="function">
    <text evidence="4 5">Chitinase that possesses antifungal activity (PubMed:23331415). Inhibits the growth of the fungal pathogen Rhizoctonia solani by degrading the fungal cell wall (PubMed:23331415). Does not possess inhibiting activity against fungal endo-1,4-beta-D-xylanases belonging to glycoside hydrolase family 10 (GH10) and family 11 (GH11) (PubMed:23331415). Involved in the regulation of plant growth by regulating the intracellular calcium ion concentration in roots (PubMed:28401568).</text>
</comment>
<comment type="catalytic activity">
    <reaction evidence="4">
        <text>Random endo-hydrolysis of N-acetyl-beta-D-glucosaminide (1-&gt;4)-beta-linkages in chitin and chitodextrins.</text>
        <dbReference type="EC" id="3.2.1.14"/>
    </reaction>
</comment>
<comment type="subcellular location">
    <subcellularLocation>
        <location evidence="5">Secreted</location>
        <location evidence="5">Extracellular space</location>
        <location evidence="5">Apoplast</location>
    </subcellularLocation>
</comment>
<comment type="tissue specificity">
    <text evidence="5">Expressed in roots (PubMed:28401568). Expressed at low levels in leaf sheaths, stems and flowers (PubMed:28401568).</text>
</comment>
<comment type="induction">
    <text evidence="4">Induced by infection with an incompatible race of the fungal pathogen Magnaporthe oryzae.</text>
</comment>
<comment type="disruption phenotype">
    <text evidence="5">Retarded growth of roots and shoots.</text>
</comment>
<comment type="similarity">
    <text evidence="3 7">Belongs to the peptidase A1 family.</text>
</comment>
<feature type="signal peptide" evidence="1">
    <location>
        <begin position="1"/>
        <end position="18"/>
    </location>
</feature>
<feature type="chain" id="PRO_5013535939" description="Chitinase CLP">
    <location>
        <begin position="19"/>
        <end position="424"/>
    </location>
</feature>
<feature type="domain" description="Peptidase A1" evidence="3">
    <location>
        <begin position="43"/>
        <end position="405"/>
    </location>
</feature>
<feature type="glycosylation site" description="N-linked (GlcNAc...) asparagine" evidence="2">
    <location>
        <position position="139"/>
    </location>
</feature>
<feature type="glycosylation site" description="N-linked (GlcNAc...) asparagine" evidence="2">
    <location>
        <position position="345"/>
    </location>
</feature>
<feature type="glycosylation site" description="N-linked (GlcNAc...) asparagine" evidence="2">
    <location>
        <position position="419"/>
    </location>
</feature>
<accession>Q8S1V1</accession>